<dbReference type="EC" id="5.4.2.12" evidence="1"/>
<dbReference type="EMBL" id="BX936398">
    <property type="protein sequence ID" value="CAH19300.1"/>
    <property type="molecule type" value="Genomic_DNA"/>
</dbReference>
<dbReference type="RefSeq" id="WP_011191453.1">
    <property type="nucleotide sequence ID" value="NC_006155.1"/>
</dbReference>
<dbReference type="SMR" id="Q66GC2"/>
<dbReference type="GeneID" id="49787970"/>
<dbReference type="KEGG" id="ypo:BZ17_2535"/>
<dbReference type="KEGG" id="yps:YPTB0060"/>
<dbReference type="PATRIC" id="fig|273123.14.peg.2660"/>
<dbReference type="UniPathway" id="UPA00109">
    <property type="reaction ID" value="UER00186"/>
</dbReference>
<dbReference type="Proteomes" id="UP000001011">
    <property type="component" value="Chromosome"/>
</dbReference>
<dbReference type="GO" id="GO:0005829">
    <property type="term" value="C:cytosol"/>
    <property type="evidence" value="ECO:0007669"/>
    <property type="project" value="TreeGrafter"/>
</dbReference>
<dbReference type="GO" id="GO:0030145">
    <property type="term" value="F:manganese ion binding"/>
    <property type="evidence" value="ECO:0007669"/>
    <property type="project" value="UniProtKB-UniRule"/>
</dbReference>
<dbReference type="GO" id="GO:0004619">
    <property type="term" value="F:phosphoglycerate mutase activity"/>
    <property type="evidence" value="ECO:0007669"/>
    <property type="project" value="UniProtKB-EC"/>
</dbReference>
<dbReference type="GO" id="GO:0006007">
    <property type="term" value="P:glucose catabolic process"/>
    <property type="evidence" value="ECO:0007669"/>
    <property type="project" value="InterPro"/>
</dbReference>
<dbReference type="GO" id="GO:0006096">
    <property type="term" value="P:glycolytic process"/>
    <property type="evidence" value="ECO:0007669"/>
    <property type="project" value="UniProtKB-UniRule"/>
</dbReference>
<dbReference type="CDD" id="cd16010">
    <property type="entry name" value="iPGM"/>
    <property type="match status" value="1"/>
</dbReference>
<dbReference type="FunFam" id="3.40.1450.10:FF:000001">
    <property type="entry name" value="2,3-bisphosphoglycerate-independent phosphoglycerate mutase"/>
    <property type="match status" value="1"/>
</dbReference>
<dbReference type="FunFam" id="3.40.720.10:FF:000001">
    <property type="entry name" value="2,3-bisphosphoglycerate-independent phosphoglycerate mutase"/>
    <property type="match status" value="1"/>
</dbReference>
<dbReference type="Gene3D" id="3.40.720.10">
    <property type="entry name" value="Alkaline Phosphatase, subunit A"/>
    <property type="match status" value="1"/>
</dbReference>
<dbReference type="Gene3D" id="3.40.1450.10">
    <property type="entry name" value="BPG-independent phosphoglycerate mutase, domain B"/>
    <property type="match status" value="1"/>
</dbReference>
<dbReference type="HAMAP" id="MF_01038">
    <property type="entry name" value="GpmI"/>
    <property type="match status" value="1"/>
</dbReference>
<dbReference type="InterPro" id="IPR017850">
    <property type="entry name" value="Alkaline_phosphatase_core_sf"/>
</dbReference>
<dbReference type="InterPro" id="IPR011258">
    <property type="entry name" value="BPG-indep_PGM_N"/>
</dbReference>
<dbReference type="InterPro" id="IPR006124">
    <property type="entry name" value="Metalloenzyme"/>
</dbReference>
<dbReference type="InterPro" id="IPR036646">
    <property type="entry name" value="PGAM_B_sf"/>
</dbReference>
<dbReference type="InterPro" id="IPR005995">
    <property type="entry name" value="Pgm_bpd_ind"/>
</dbReference>
<dbReference type="NCBIfam" id="TIGR01307">
    <property type="entry name" value="pgm_bpd_ind"/>
    <property type="match status" value="1"/>
</dbReference>
<dbReference type="NCBIfam" id="NF003897">
    <property type="entry name" value="PRK05434.1-5"/>
    <property type="match status" value="1"/>
</dbReference>
<dbReference type="PANTHER" id="PTHR31637">
    <property type="entry name" value="2,3-BISPHOSPHOGLYCERATE-INDEPENDENT PHOSPHOGLYCERATE MUTASE"/>
    <property type="match status" value="1"/>
</dbReference>
<dbReference type="PANTHER" id="PTHR31637:SF0">
    <property type="entry name" value="2,3-BISPHOSPHOGLYCERATE-INDEPENDENT PHOSPHOGLYCERATE MUTASE"/>
    <property type="match status" value="1"/>
</dbReference>
<dbReference type="Pfam" id="PF06415">
    <property type="entry name" value="iPGM_N"/>
    <property type="match status" value="1"/>
</dbReference>
<dbReference type="Pfam" id="PF01676">
    <property type="entry name" value="Metalloenzyme"/>
    <property type="match status" value="1"/>
</dbReference>
<dbReference type="PIRSF" id="PIRSF001492">
    <property type="entry name" value="IPGAM"/>
    <property type="match status" value="1"/>
</dbReference>
<dbReference type="SUPFAM" id="SSF64158">
    <property type="entry name" value="2,3-Bisphosphoglycerate-independent phosphoglycerate mutase, substrate-binding domain"/>
    <property type="match status" value="1"/>
</dbReference>
<dbReference type="SUPFAM" id="SSF53649">
    <property type="entry name" value="Alkaline phosphatase-like"/>
    <property type="match status" value="1"/>
</dbReference>
<sequence length="515" mass="56154">MSSTKKPLVLTILDGYGHREEQQDNAILNAKTPVMDVLWQQQPHTLIAASGLDVGLPDGQMGNSEVGHVNLGAGRIVYQDLTRLDKEIKEGDFFTNPTLTAAVDNAVKTGKAVHIMGLLSAGGVHSHEDHIMAMVELAAKRGATAIYLHAFLDGRDTPPRSAESSLKRFTAKFAELGNGRIASIIGRYYAMDRDNRWDRVQLAYDLLTQAKGEFTADNAVAGLQAAYARGENDEFVKPTVIQATGEADAAMNEGDTLIFMNFRADRARQITRTFVNADFDGFKRDKVVNFGDFIMLTEYAADIKVACAYPPASLTNTFGEWLMKHDKTQLRISETEKYAHVTFFYNGGVEEPFKGEDRILINSPKVATYDLQPEMSSAELTEKLVSAIGSGKYDVIICNYPNGDMVGHTGDYDAAVKAVETLDNCIEQVVAAVKAADGQLLITADHGNAEQMRDPATGQAHTAHTSLPVPLIYVGNKAVKAVEGGKLSDIAPTMLSLMEMEIPQEMTGKPLFIVE</sequence>
<reference key="1">
    <citation type="journal article" date="2004" name="Proc. Natl. Acad. Sci. U.S.A.">
        <title>Insights into the evolution of Yersinia pestis through whole-genome comparison with Yersinia pseudotuberculosis.</title>
        <authorList>
            <person name="Chain P.S.G."/>
            <person name="Carniel E."/>
            <person name="Larimer F.W."/>
            <person name="Lamerdin J."/>
            <person name="Stoutland P.O."/>
            <person name="Regala W.M."/>
            <person name="Georgescu A.M."/>
            <person name="Vergez L.M."/>
            <person name="Land M.L."/>
            <person name="Motin V.L."/>
            <person name="Brubaker R.R."/>
            <person name="Fowler J."/>
            <person name="Hinnebusch J."/>
            <person name="Marceau M."/>
            <person name="Medigue C."/>
            <person name="Simonet M."/>
            <person name="Chenal-Francisque V."/>
            <person name="Souza B."/>
            <person name="Dacheux D."/>
            <person name="Elliott J.M."/>
            <person name="Derbise A."/>
            <person name="Hauser L.J."/>
            <person name="Garcia E."/>
        </authorList>
    </citation>
    <scope>NUCLEOTIDE SEQUENCE [LARGE SCALE GENOMIC DNA]</scope>
    <source>
        <strain>IP32953</strain>
    </source>
</reference>
<gene>
    <name evidence="1" type="primary">gpmI</name>
    <name type="ordered locus">YPTB0060</name>
</gene>
<evidence type="ECO:0000255" key="1">
    <source>
        <dbReference type="HAMAP-Rule" id="MF_01038"/>
    </source>
</evidence>
<proteinExistence type="inferred from homology"/>
<name>GPMI_YERPS</name>
<keyword id="KW-0324">Glycolysis</keyword>
<keyword id="KW-0413">Isomerase</keyword>
<keyword id="KW-0464">Manganese</keyword>
<keyword id="KW-0479">Metal-binding</keyword>
<organism>
    <name type="scientific">Yersinia pseudotuberculosis serotype I (strain IP32953)</name>
    <dbReference type="NCBI Taxonomy" id="273123"/>
    <lineage>
        <taxon>Bacteria</taxon>
        <taxon>Pseudomonadati</taxon>
        <taxon>Pseudomonadota</taxon>
        <taxon>Gammaproteobacteria</taxon>
        <taxon>Enterobacterales</taxon>
        <taxon>Yersiniaceae</taxon>
        <taxon>Yersinia</taxon>
    </lineage>
</organism>
<accession>Q66GC2</accession>
<feature type="chain" id="PRO_0000212235" description="2,3-bisphosphoglycerate-independent phosphoglycerate mutase">
    <location>
        <begin position="1"/>
        <end position="515"/>
    </location>
</feature>
<feature type="active site" description="Phosphoserine intermediate" evidence="1">
    <location>
        <position position="64"/>
    </location>
</feature>
<feature type="binding site" evidence="1">
    <location>
        <position position="14"/>
    </location>
    <ligand>
        <name>Mn(2+)</name>
        <dbReference type="ChEBI" id="CHEBI:29035"/>
        <label>2</label>
    </ligand>
</feature>
<feature type="binding site" evidence="1">
    <location>
        <position position="64"/>
    </location>
    <ligand>
        <name>Mn(2+)</name>
        <dbReference type="ChEBI" id="CHEBI:29035"/>
        <label>2</label>
    </ligand>
</feature>
<feature type="binding site" evidence="1">
    <location>
        <position position="125"/>
    </location>
    <ligand>
        <name>substrate</name>
    </ligand>
</feature>
<feature type="binding site" evidence="1">
    <location>
        <begin position="155"/>
        <end position="156"/>
    </location>
    <ligand>
        <name>substrate</name>
    </ligand>
</feature>
<feature type="binding site" evidence="1">
    <location>
        <position position="187"/>
    </location>
    <ligand>
        <name>substrate</name>
    </ligand>
</feature>
<feature type="binding site" evidence="1">
    <location>
        <position position="193"/>
    </location>
    <ligand>
        <name>substrate</name>
    </ligand>
</feature>
<feature type="binding site" evidence="1">
    <location>
        <begin position="263"/>
        <end position="266"/>
    </location>
    <ligand>
        <name>substrate</name>
    </ligand>
</feature>
<feature type="binding site" evidence="1">
    <location>
        <position position="337"/>
    </location>
    <ligand>
        <name>substrate</name>
    </ligand>
</feature>
<feature type="binding site" evidence="1">
    <location>
        <position position="404"/>
    </location>
    <ligand>
        <name>Mn(2+)</name>
        <dbReference type="ChEBI" id="CHEBI:29035"/>
        <label>1</label>
    </ligand>
</feature>
<feature type="binding site" evidence="1">
    <location>
        <position position="408"/>
    </location>
    <ligand>
        <name>Mn(2+)</name>
        <dbReference type="ChEBI" id="CHEBI:29035"/>
        <label>1</label>
    </ligand>
</feature>
<feature type="binding site" evidence="1">
    <location>
        <position position="445"/>
    </location>
    <ligand>
        <name>Mn(2+)</name>
        <dbReference type="ChEBI" id="CHEBI:29035"/>
        <label>2</label>
    </ligand>
</feature>
<feature type="binding site" evidence="1">
    <location>
        <position position="446"/>
    </location>
    <ligand>
        <name>Mn(2+)</name>
        <dbReference type="ChEBI" id="CHEBI:29035"/>
        <label>2</label>
    </ligand>
</feature>
<feature type="binding site" evidence="1">
    <location>
        <position position="464"/>
    </location>
    <ligand>
        <name>Mn(2+)</name>
        <dbReference type="ChEBI" id="CHEBI:29035"/>
        <label>1</label>
    </ligand>
</feature>
<protein>
    <recommendedName>
        <fullName evidence="1">2,3-bisphosphoglycerate-independent phosphoglycerate mutase</fullName>
        <shortName evidence="1">BPG-independent PGAM</shortName>
        <shortName evidence="1">Phosphoglyceromutase</shortName>
        <shortName evidence="1">iPGM</shortName>
        <ecNumber evidence="1">5.4.2.12</ecNumber>
    </recommendedName>
</protein>
<comment type="function">
    <text evidence="1">Catalyzes the interconversion of 2-phosphoglycerate and 3-phosphoglycerate.</text>
</comment>
<comment type="catalytic activity">
    <reaction evidence="1">
        <text>(2R)-2-phosphoglycerate = (2R)-3-phosphoglycerate</text>
        <dbReference type="Rhea" id="RHEA:15901"/>
        <dbReference type="ChEBI" id="CHEBI:58272"/>
        <dbReference type="ChEBI" id="CHEBI:58289"/>
        <dbReference type="EC" id="5.4.2.12"/>
    </reaction>
</comment>
<comment type="cofactor">
    <cofactor evidence="1">
        <name>Mn(2+)</name>
        <dbReference type="ChEBI" id="CHEBI:29035"/>
    </cofactor>
    <text evidence="1">Binds 2 manganese ions per subunit.</text>
</comment>
<comment type="pathway">
    <text evidence="1">Carbohydrate degradation; glycolysis; pyruvate from D-glyceraldehyde 3-phosphate: step 3/5.</text>
</comment>
<comment type="subunit">
    <text evidence="1">Monomer.</text>
</comment>
<comment type="similarity">
    <text evidence="1">Belongs to the BPG-independent phosphoglycerate mutase family.</text>
</comment>